<comment type="similarity">
    <text evidence="2">Belongs to the metallophosphoesterase superfamily. IIV-6 244L family.</text>
</comment>
<organism>
    <name type="scientific">Invertebrate iridescent virus 6</name>
    <name type="common">IIV-6</name>
    <name type="synonym">Chilo iridescent virus</name>
    <dbReference type="NCBI Taxonomy" id="176652"/>
    <lineage>
        <taxon>Viruses</taxon>
        <taxon>Varidnaviria</taxon>
        <taxon>Bamfordvirae</taxon>
        <taxon>Nucleocytoviricota</taxon>
        <taxon>Megaviricetes</taxon>
        <taxon>Pimascovirales</taxon>
        <taxon>Iridoviridae</taxon>
        <taxon>Betairidovirinae</taxon>
        <taxon>Iridovirus</taxon>
    </lineage>
</organism>
<keyword id="KW-0378">Hydrolase</keyword>
<keyword id="KW-0479">Metal-binding</keyword>
<keyword id="KW-1185">Reference proteome</keyword>
<dbReference type="EC" id="3.1.-.-"/>
<dbReference type="EMBL" id="AF303741">
    <property type="protein sequence ID" value="AAK82105.1"/>
    <property type="molecule type" value="Genomic_DNA"/>
</dbReference>
<dbReference type="RefSeq" id="NP_149707.1">
    <property type="nucleotide sequence ID" value="NC_003038.1"/>
</dbReference>
<dbReference type="SMR" id="Q91FS8"/>
<dbReference type="KEGG" id="vg:1733328"/>
<dbReference type="OrthoDB" id="9744at10239"/>
<dbReference type="Proteomes" id="UP000001359">
    <property type="component" value="Genome"/>
</dbReference>
<dbReference type="GO" id="GO:0016787">
    <property type="term" value="F:hydrolase activity"/>
    <property type="evidence" value="ECO:0007669"/>
    <property type="project" value="UniProtKB-KW"/>
</dbReference>
<dbReference type="GO" id="GO:0046872">
    <property type="term" value="F:metal ion binding"/>
    <property type="evidence" value="ECO:0007669"/>
    <property type="project" value="UniProtKB-KW"/>
</dbReference>
<dbReference type="Gene3D" id="3.60.21.10">
    <property type="match status" value="1"/>
</dbReference>
<dbReference type="InterPro" id="IPR004843">
    <property type="entry name" value="Calcineurin-like_PHP_ApaH"/>
</dbReference>
<dbReference type="InterPro" id="IPR050535">
    <property type="entry name" value="DNA_Repair-Maintenance_Comp"/>
</dbReference>
<dbReference type="InterPro" id="IPR029052">
    <property type="entry name" value="Metallo-depent_PP-like"/>
</dbReference>
<dbReference type="PANTHER" id="PTHR30337">
    <property type="entry name" value="COMPONENT OF ATP-DEPENDENT DSDNA EXONUCLEASE"/>
    <property type="match status" value="1"/>
</dbReference>
<dbReference type="PANTHER" id="PTHR30337:SF0">
    <property type="entry name" value="NUCLEASE SBCCD SUBUNIT D"/>
    <property type="match status" value="1"/>
</dbReference>
<dbReference type="Pfam" id="PF00149">
    <property type="entry name" value="Metallophos"/>
    <property type="match status" value="1"/>
</dbReference>
<dbReference type="SUPFAM" id="SSF56300">
    <property type="entry name" value="Metallo-dependent phosphatases"/>
    <property type="match status" value="1"/>
</dbReference>
<reference key="1">
    <citation type="journal article" date="2001" name="Virology">
        <title>Analysis of the first complete DNA sequence of an invertebrate iridovirus: coding strategy of the genome of Chilo iridescent virus.</title>
        <authorList>
            <person name="Jakob N.J."/>
            <person name="Mueller K."/>
            <person name="Bahr U."/>
            <person name="Darai G."/>
        </authorList>
    </citation>
    <scope>NUCLEOTIDE SEQUENCE [LARGE SCALE GENOMIC DNA]</scope>
</reference>
<reference key="2">
    <citation type="journal article" date="2007" name="Virol. J.">
        <title>Comparative genomic analysis of the family Iridoviridae: re-annotating and defining the core set of iridovirus genes.</title>
        <authorList>
            <person name="Eaton H.E."/>
            <person name="Metcalf J."/>
            <person name="Penny E."/>
            <person name="Tcherepanov V."/>
            <person name="Upton C."/>
            <person name="Brunetti C.R."/>
        </authorList>
    </citation>
    <scope>GENOME REANNOTATION</scope>
</reference>
<proteinExistence type="inferred from homology"/>
<name>VF244_IIV6</name>
<accession>Q91FS8</accession>
<protein>
    <recommendedName>
        <fullName>Putative phosphoesterase 244L</fullName>
        <ecNumber>3.1.-.-</ecNumber>
    </recommendedName>
</protein>
<feature type="chain" id="PRO_0000377492" description="Putative phosphoesterase 244L">
    <location>
        <begin position="1"/>
        <end position="282"/>
    </location>
</feature>
<feature type="binding site" evidence="1">
    <location>
        <position position="45"/>
    </location>
    <ligand>
        <name>a divalent metal cation</name>
        <dbReference type="ChEBI" id="CHEBI:60240"/>
        <label>1</label>
    </ligand>
</feature>
<feature type="binding site" evidence="1">
    <location>
        <position position="45"/>
    </location>
    <ligand>
        <name>a divalent metal cation</name>
        <dbReference type="ChEBI" id="CHEBI:60240"/>
        <label>2</label>
    </ligand>
</feature>
<feature type="binding site" evidence="1">
    <location>
        <position position="80"/>
    </location>
    <ligand>
        <name>a divalent metal cation</name>
        <dbReference type="ChEBI" id="CHEBI:60240"/>
        <label>2</label>
    </ligand>
</feature>
<feature type="binding site" evidence="1">
    <location>
        <position position="203"/>
    </location>
    <ligand>
        <name>a divalent metal cation</name>
        <dbReference type="ChEBI" id="CHEBI:60240"/>
        <label>1</label>
    </ligand>
</feature>
<sequence>MDNCKILFIGDPHFKVNNIEIIDEFIHQCLEQLTSDIDICVIGGDILHTHERLHTTALNKAINFIDQVRKICPTYILVGNHDYENNQQFLSKRHWMNALKEWTNTFIIDYTSIIKIKNFTFGMVPYVPPGRFVEALNIIDNEWWKNVNCIFAHQEFYGCKMGAIESTEGDKWDHSFPLVISGHIHSEQRPQKNIFYPGSVIQHAFGESEDNGLLLLIFNDPEIGEYPLMVKKILDIPKMRTINVKISDFSTLVLDPKKNERIKIICKGSVESFKAFKKNKVV</sequence>
<gene>
    <name type="ORF">IIV6-244L</name>
</gene>
<organismHost>
    <name type="scientific">Acheta domesticus</name>
    <name type="common">House cricket</name>
    <dbReference type="NCBI Taxonomy" id="6997"/>
</organismHost>
<organismHost>
    <name type="scientific">Chilo suppressalis</name>
    <name type="common">Asiatic rice borer moth</name>
    <dbReference type="NCBI Taxonomy" id="168631"/>
</organismHost>
<organismHost>
    <name type="scientific">Gryllus bimaculatus</name>
    <name type="common">Two-spotted cricket</name>
    <dbReference type="NCBI Taxonomy" id="6999"/>
</organismHost>
<organismHost>
    <name type="scientific">Gryllus campestris</name>
    <dbReference type="NCBI Taxonomy" id="58607"/>
</organismHost>
<organismHost>
    <name type="scientific">Spodoptera frugiperda</name>
    <name type="common">Fall armyworm</name>
    <dbReference type="NCBI Taxonomy" id="7108"/>
</organismHost>
<evidence type="ECO:0000250" key="1"/>
<evidence type="ECO:0000305" key="2"/>